<sequence length="106" mass="12153">MNSILGLIDTVTNTVGKGQQIELDKAALGQQRELALQRMSLDRQALNNQVEQFNKLLEQRVHGPIQSVRLARAAGFRVDPYSYTNQNFYDDQLNAIRLSYRNLFKN</sequence>
<dbReference type="EMBL" id="D90357">
    <property type="protein sequence ID" value="BAA14372.1"/>
    <property type="molecule type" value="Genomic_RNA"/>
</dbReference>
<dbReference type="PIR" id="C40481">
    <property type="entry name" value="C40481"/>
</dbReference>
<dbReference type="SMR" id="P28710"/>
<dbReference type="Proteomes" id="UP000008668">
    <property type="component" value="Genome"/>
</dbReference>
<dbReference type="GO" id="GO:0030430">
    <property type="term" value="C:host cell cytoplasm"/>
    <property type="evidence" value="ECO:0007669"/>
    <property type="project" value="UniProtKB-SubCell"/>
</dbReference>
<dbReference type="GO" id="GO:0098021">
    <property type="term" value="C:viral capsid, decoration"/>
    <property type="evidence" value="ECO:0007669"/>
    <property type="project" value="UniProtKB-KW"/>
</dbReference>
<dbReference type="InterPro" id="IPR007996">
    <property type="entry name" value="Vesivirus_VP2"/>
</dbReference>
<dbReference type="Pfam" id="PF05332">
    <property type="entry name" value="Vesi_VP2"/>
    <property type="match status" value="1"/>
</dbReference>
<name>VP2_FCVF4</name>
<accession>P28710</accession>
<reference key="1">
    <citation type="journal article" date="1991" name="Virology">
        <title>Sequence analysis of the 3'-end of feline calicivirus genome.</title>
        <authorList>
            <person name="Tohya Y."/>
            <person name="Taniguchi Y."/>
            <person name="Takahashi E."/>
            <person name="Utagawa E."/>
            <person name="Takeda N."/>
            <person name="Miyamura K."/>
            <person name="Yamazaki S."/>
            <person name="Mikami T."/>
        </authorList>
    </citation>
    <scope>NUCLEOTIDE SEQUENCE [GENOMIC RNA]</scope>
</reference>
<organism>
    <name type="scientific">Feline calicivirus (strain Japanese F4)</name>
    <name type="common">FCV</name>
    <dbReference type="NCBI Taxonomy" id="11980"/>
    <lineage>
        <taxon>Viruses</taxon>
        <taxon>Riboviria</taxon>
        <taxon>Orthornavirae</taxon>
        <taxon>Pisuviricota</taxon>
        <taxon>Pisoniviricetes</taxon>
        <taxon>Picornavirales</taxon>
        <taxon>Caliciviridae</taxon>
        <taxon>Vesivirus</taxon>
        <taxon>Feline calicivirus</taxon>
    </lineage>
</organism>
<feature type="chain" id="PRO_0000100123" description="Minor capsid protein VP2">
    <location>
        <begin position="1"/>
        <end position="106"/>
    </location>
</feature>
<organismHost>
    <name type="scientific">Felidae</name>
    <name type="common">cat family</name>
    <dbReference type="NCBI Taxonomy" id="9681"/>
</organismHost>
<gene>
    <name type="ORF">ORF3</name>
</gene>
<keyword id="KW-1232">Capsid decoration protein</keyword>
<keyword id="KW-0167">Capsid protein</keyword>
<keyword id="KW-1035">Host cytoplasm</keyword>
<keyword id="KW-0946">Virion</keyword>
<protein>
    <recommendedName>
        <fullName>Minor capsid protein VP2</fullName>
    </recommendedName>
</protein>
<proteinExistence type="inferred from homology"/>
<comment type="function">
    <text evidence="1">Minor structural protein that forms a portal-like structure at a unique three-fold axis of symmetry, following binding to the host receptor. The virion attaches to feline junctional adhesion molecule A (F11R). Once attached, the virion is endocytosed. Acidification of the endosome induces conformational change of capsid protein thereby injecting virus genomic RNA into host cytoplasm. The channel formed by VP2 may allow the delivery of the viral genome through the host endosomal membrane.</text>
</comment>
<comment type="subunit">
    <text evidence="1">Homooligomer. The portal-like structure consists in 12 copies of VP2. Interacts with capsid protein VP1.</text>
</comment>
<comment type="subcellular location">
    <subcellularLocation>
        <location evidence="1">Virion</location>
    </subcellularLocation>
    <subcellularLocation>
        <location evidence="2">Host cytoplasm</location>
    </subcellularLocation>
</comment>
<comment type="domain">
    <text evidence="1">The N-terminus domain points away from the virion surface.</text>
</comment>
<comment type="miscellaneous">
    <text evidence="1">Translated by a ribosomal termination-reinitiation process from the bicistronic mRNA coding for VP1 and VP2.</text>
</comment>
<comment type="similarity">
    <text evidence="2">Belongs to the vesivirus VP2 protein family.</text>
</comment>
<evidence type="ECO:0000250" key="1">
    <source>
        <dbReference type="UniProtKB" id="P28711"/>
    </source>
</evidence>
<evidence type="ECO:0000305" key="2"/>